<keyword id="KW-0325">Glycoprotein</keyword>
<keyword id="KW-0345">HDL</keyword>
<keyword id="KW-0358">Heparin-binding</keyword>
<keyword id="KW-0378">Hydrolase</keyword>
<keyword id="KW-0442">Lipid degradation</keyword>
<keyword id="KW-0443">Lipid metabolism</keyword>
<keyword id="KW-1185">Reference proteome</keyword>
<keyword id="KW-0964">Secreted</keyword>
<keyword id="KW-0732">Signal</keyword>
<evidence type="ECO:0000250" key="1"/>
<evidence type="ECO:0000250" key="2">
    <source>
        <dbReference type="UniProtKB" id="P07867"/>
    </source>
</evidence>
<evidence type="ECO:0000250" key="3">
    <source>
        <dbReference type="UniProtKB" id="P11150"/>
    </source>
</evidence>
<evidence type="ECO:0000255" key="4"/>
<evidence type="ECO:0000255" key="5">
    <source>
        <dbReference type="PROSITE-ProRule" id="PRU00152"/>
    </source>
</evidence>
<evidence type="ECO:0000255" key="6">
    <source>
        <dbReference type="PROSITE-ProRule" id="PRU10037"/>
    </source>
</evidence>
<evidence type="ECO:0000269" key="7">
    <source>
    </source>
</evidence>
<evidence type="ECO:0000305" key="8"/>
<name>LIPC_RABIT</name>
<feature type="signal peptide" evidence="3">
    <location>
        <begin position="1"/>
        <end position="21"/>
    </location>
</feature>
<feature type="chain" id="PRO_0000233341" description="Hepatic triacylglycerol lipase">
    <location>
        <begin position="22"/>
        <end position="499"/>
    </location>
</feature>
<feature type="domain" description="PLAT" evidence="5">
    <location>
        <begin position="352"/>
        <end position="486"/>
    </location>
</feature>
<feature type="region of interest" description="Essential for determining substrate specificity" evidence="3">
    <location>
        <begin position="254"/>
        <end position="277"/>
    </location>
</feature>
<feature type="active site" description="Nucleophile" evidence="1">
    <location>
        <position position="168"/>
    </location>
</feature>
<feature type="active site" description="Charge relay system" evidence="6">
    <location>
        <position position="194"/>
    </location>
</feature>
<feature type="active site" description="Charge relay system" evidence="6">
    <location>
        <position position="279"/>
    </location>
</feature>
<feature type="glycosylation site" description="N-linked (GlcNAc...) asparagine" evidence="4">
    <location>
        <position position="78"/>
    </location>
</feature>
<feature type="glycosylation site" description="N-linked (GlcNAc...) asparagine" evidence="4">
    <location>
        <position position="397"/>
    </location>
</feature>
<gene>
    <name type="primary">LIPC</name>
</gene>
<comment type="function">
    <text evidence="2 3 7">Catalyzes the hydrolysis of triglycerides and phospholipids present in circulating plasma lipoproteins, including chylomicrons, intermediate density lipoproteins (IDL), low density lipoproteins (LDL) of large size and high density lipoproteins (HDL), releasing free fatty acids (FFA) and smaller lipoprotein particles (PubMed:1770315). Also exhibits lysophospholipase activity (By similarity). Can hydrolyze both neutral lipid and phospholipid substrates but shows a greater binding affinity for neutral lipid substrates than phospholipid substrates (By similarity). In native LDL, preferentially hydrolyzes the phosphatidylcholine species containing polyunsaturated fatty acids at sn-2 position (By similarity).</text>
</comment>
<comment type="catalytic activity">
    <reaction evidence="7">
        <text>a triacylglycerol + H2O = a diacylglycerol + a fatty acid + H(+)</text>
        <dbReference type="Rhea" id="RHEA:12044"/>
        <dbReference type="ChEBI" id="CHEBI:15377"/>
        <dbReference type="ChEBI" id="CHEBI:15378"/>
        <dbReference type="ChEBI" id="CHEBI:17855"/>
        <dbReference type="ChEBI" id="CHEBI:18035"/>
        <dbReference type="ChEBI" id="CHEBI:28868"/>
        <dbReference type="EC" id="3.1.1.3"/>
    </reaction>
</comment>
<comment type="catalytic activity">
    <reaction evidence="2">
        <text>a 1-acyl-sn-glycero-3-phosphocholine + H2O = sn-glycerol 3-phosphocholine + a fatty acid + H(+)</text>
        <dbReference type="Rhea" id="RHEA:15177"/>
        <dbReference type="ChEBI" id="CHEBI:15377"/>
        <dbReference type="ChEBI" id="CHEBI:15378"/>
        <dbReference type="ChEBI" id="CHEBI:16870"/>
        <dbReference type="ChEBI" id="CHEBI:28868"/>
        <dbReference type="ChEBI" id="CHEBI:58168"/>
        <dbReference type="EC" id="3.1.1.5"/>
    </reaction>
</comment>
<comment type="catalytic activity">
    <reaction evidence="2">
        <text>a 1,2-diacyl-sn-glycero-3-phosphocholine + H2O = a 2-acyl-sn-glycero-3-phosphocholine + a fatty acid + H(+)</text>
        <dbReference type="Rhea" id="RHEA:18689"/>
        <dbReference type="ChEBI" id="CHEBI:15377"/>
        <dbReference type="ChEBI" id="CHEBI:15378"/>
        <dbReference type="ChEBI" id="CHEBI:28868"/>
        <dbReference type="ChEBI" id="CHEBI:57643"/>
        <dbReference type="ChEBI" id="CHEBI:57875"/>
        <dbReference type="EC" id="3.1.1.32"/>
    </reaction>
</comment>
<comment type="catalytic activity">
    <reaction evidence="3">
        <text>1,2,3-tri-(9Z-octadecenoyl)-glycerol + H2O = di-(9Z)-octadecenoylglycerol + (9Z)-octadecenoate + H(+)</text>
        <dbReference type="Rhea" id="RHEA:38575"/>
        <dbReference type="ChEBI" id="CHEBI:15377"/>
        <dbReference type="ChEBI" id="CHEBI:15378"/>
        <dbReference type="ChEBI" id="CHEBI:30823"/>
        <dbReference type="ChEBI" id="CHEBI:53753"/>
        <dbReference type="ChEBI" id="CHEBI:75945"/>
    </reaction>
    <physiologicalReaction direction="left-to-right" evidence="3">
        <dbReference type="Rhea" id="RHEA:38576"/>
    </physiologicalReaction>
</comment>
<comment type="catalytic activity">
    <reaction evidence="3">
        <text>1,2-di-(9Z-octadecenoyl)-sn-glycero-3-phosphocholine + H2O = (9Z-octadecenoyl)-sn-glycero-3-phosphocholine + (9Z)-octadecenoate + H(+)</text>
        <dbReference type="Rhea" id="RHEA:38699"/>
        <dbReference type="ChEBI" id="CHEBI:15377"/>
        <dbReference type="ChEBI" id="CHEBI:15378"/>
        <dbReference type="ChEBI" id="CHEBI:30823"/>
        <dbReference type="ChEBI" id="CHEBI:74669"/>
        <dbReference type="ChEBI" id="CHEBI:76083"/>
    </reaction>
    <physiologicalReaction direction="left-to-right" evidence="3">
        <dbReference type="Rhea" id="RHEA:38700"/>
    </physiologicalReaction>
</comment>
<comment type="catalytic activity">
    <reaction evidence="3">
        <text>1,2,3-tributanoylglycerol + H2O = dibutanoylglycerol + butanoate + H(+)</text>
        <dbReference type="Rhea" id="RHEA:40475"/>
        <dbReference type="ChEBI" id="CHEBI:15377"/>
        <dbReference type="ChEBI" id="CHEBI:15378"/>
        <dbReference type="ChEBI" id="CHEBI:17968"/>
        <dbReference type="ChEBI" id="CHEBI:35020"/>
        <dbReference type="ChEBI" id="CHEBI:76478"/>
    </reaction>
    <physiologicalReaction direction="left-to-right" evidence="3">
        <dbReference type="Rhea" id="RHEA:40476"/>
    </physiologicalReaction>
</comment>
<comment type="catalytic activity">
    <reaction evidence="3">
        <text>1,2-dihexadecanoyl-sn-glycero-3-phosphocholine + H2O = hexadecanoyl-sn-glycero-3-phosphocholine + hexadecanoate + H(+)</text>
        <dbReference type="Rhea" id="RHEA:41384"/>
        <dbReference type="ChEBI" id="CHEBI:7896"/>
        <dbReference type="ChEBI" id="CHEBI:15377"/>
        <dbReference type="ChEBI" id="CHEBI:15378"/>
        <dbReference type="ChEBI" id="CHEBI:64563"/>
        <dbReference type="ChEBI" id="CHEBI:72999"/>
    </reaction>
    <physiologicalReaction direction="left-to-right" evidence="3">
        <dbReference type="Rhea" id="RHEA:41385"/>
    </physiologicalReaction>
</comment>
<comment type="catalytic activity">
    <reaction evidence="2">
        <text>1,2-di-(9Z-octadecenoyl)-sn-glycerol + H2O = 2-(9Z-octadecenoyl)-glycerol + (9Z)-octadecenoate + H(+)</text>
        <dbReference type="Rhea" id="RHEA:38511"/>
        <dbReference type="ChEBI" id="CHEBI:15377"/>
        <dbReference type="ChEBI" id="CHEBI:15378"/>
        <dbReference type="ChEBI" id="CHEBI:30823"/>
        <dbReference type="ChEBI" id="CHEBI:52333"/>
        <dbReference type="ChEBI" id="CHEBI:73990"/>
    </reaction>
    <physiologicalReaction direction="left-to-right" evidence="2">
        <dbReference type="Rhea" id="RHEA:38512"/>
    </physiologicalReaction>
</comment>
<comment type="catalytic activity">
    <reaction evidence="2">
        <text>1,2,3-tri-(9Z-octadecenoyl)-glycerol + H2O = 2,3-di-(9Z)-octadecenoyl-sn-glycerol + (9Z)-octadecenoate + H(+)</text>
        <dbReference type="Rhea" id="RHEA:38391"/>
        <dbReference type="ChEBI" id="CHEBI:15377"/>
        <dbReference type="ChEBI" id="CHEBI:15378"/>
        <dbReference type="ChEBI" id="CHEBI:30823"/>
        <dbReference type="ChEBI" id="CHEBI:53753"/>
        <dbReference type="ChEBI" id="CHEBI:75824"/>
    </reaction>
    <physiologicalReaction direction="left-to-right" evidence="2">
        <dbReference type="Rhea" id="RHEA:38392"/>
    </physiologicalReaction>
</comment>
<comment type="catalytic activity">
    <reaction evidence="2">
        <text>1-(9Z-octadecenoyl)-sn-glycero-3-phospho-L-serine + H2O = sn-glycero-3-phospho-L-serine + (9Z)-octadecenoate + H(+)</text>
        <dbReference type="Rhea" id="RHEA:40499"/>
        <dbReference type="ChEBI" id="CHEBI:15377"/>
        <dbReference type="ChEBI" id="CHEBI:15378"/>
        <dbReference type="ChEBI" id="CHEBI:30823"/>
        <dbReference type="ChEBI" id="CHEBI:64765"/>
        <dbReference type="ChEBI" id="CHEBI:74617"/>
    </reaction>
    <physiologicalReaction direction="left-to-right" evidence="2">
        <dbReference type="Rhea" id="RHEA:40500"/>
    </physiologicalReaction>
</comment>
<comment type="catalytic activity">
    <reaction evidence="2">
        <text>1-hexadecanoyl-sn-glycero-3-phosphocholine + H2O = sn-glycerol 3-phosphocholine + hexadecanoate + H(+)</text>
        <dbReference type="Rhea" id="RHEA:40435"/>
        <dbReference type="ChEBI" id="CHEBI:7896"/>
        <dbReference type="ChEBI" id="CHEBI:15377"/>
        <dbReference type="ChEBI" id="CHEBI:15378"/>
        <dbReference type="ChEBI" id="CHEBI:16870"/>
        <dbReference type="ChEBI" id="CHEBI:72998"/>
    </reaction>
    <physiologicalReaction direction="left-to-right" evidence="2">
        <dbReference type="Rhea" id="RHEA:40436"/>
    </physiologicalReaction>
</comment>
<comment type="catalytic activity">
    <reaction evidence="2">
        <text>1,3-di-(9Z-octadecenoyl)-glycerol + H2O = 3-(9Z-octadecenoyl)-sn-glycerol + (9Z)-octadecenoate + H(+)</text>
        <dbReference type="Rhea" id="RHEA:38651"/>
        <dbReference type="ChEBI" id="CHEBI:15377"/>
        <dbReference type="ChEBI" id="CHEBI:15378"/>
        <dbReference type="ChEBI" id="CHEBI:30823"/>
        <dbReference type="ChEBI" id="CHEBI:75735"/>
        <dbReference type="ChEBI" id="CHEBI:75938"/>
    </reaction>
    <physiologicalReaction direction="left-to-right" evidence="2">
        <dbReference type="Rhea" id="RHEA:38652"/>
    </physiologicalReaction>
</comment>
<comment type="subunit">
    <text evidence="3">Homodimer.</text>
</comment>
<comment type="subcellular location">
    <subcellularLocation>
        <location evidence="3">Secreted</location>
    </subcellularLocation>
</comment>
<comment type="similarity">
    <text evidence="8">Belongs to the AB hydrolase superfamily. Lipase family.</text>
</comment>
<sequence>MGSPLCVPIFLAVCILIQSSTHGQSLRPEPFGRRARVTATKKTLLETETRFLLFKDKANKGCQIRLHHADTLQECGFNSSLPLVMIVHGWSVDGLLESWIWQMVAALKSQPARPVNVGLVDWISLAHSHYAVAVRNARLVGQEVAALLQWLEESAPFSRSNVHLIGYSLGAHVAGFAGSYISGKHKIGRITGLDAAGPLFEGTSASDRLSPDDATFVDAIHTFTREHMGLSVGIKQPVGHYDFYPNGGSFQPGCHFLELYKHIAQHGLNALSQTIKCAHERSVHLFIDSLLHPSMQSTAYQCSDMDSFSQGLCLGCTKGRCNTLGYHIRQEPLSKGKRLFLVTQAQSPFRVYHYQFKIQFINQIEKPLEPTFTMSLLGTKEEMQKIPITLGEGITSNKTYSFLITLNLDIGELMVIKFKWENSAVWANVWNTVQTIIPWGIKPRNSGLILKTIRVKAGETQQRMTFCSENMDDLQLHPTQEKNFVRCEVNPKKLKLKIK</sequence>
<accession>O46559</accession>
<organism>
    <name type="scientific">Oryctolagus cuniculus</name>
    <name type="common">Rabbit</name>
    <dbReference type="NCBI Taxonomy" id="9986"/>
    <lineage>
        <taxon>Eukaryota</taxon>
        <taxon>Metazoa</taxon>
        <taxon>Chordata</taxon>
        <taxon>Craniata</taxon>
        <taxon>Vertebrata</taxon>
        <taxon>Euteleostomi</taxon>
        <taxon>Mammalia</taxon>
        <taxon>Eutheria</taxon>
        <taxon>Euarchontoglires</taxon>
        <taxon>Glires</taxon>
        <taxon>Lagomorpha</taxon>
        <taxon>Leporidae</taxon>
        <taxon>Oryctolagus</taxon>
    </lineage>
</organism>
<dbReference type="EC" id="3.1.1.3" evidence="7"/>
<dbReference type="EC" id="3.1.1.5" evidence="2"/>
<dbReference type="EC" id="3.1.1.32" evidence="2"/>
<dbReference type="EMBL" id="AF041202">
    <property type="protein sequence ID" value="AAB96786.1"/>
    <property type="molecule type" value="mRNA"/>
</dbReference>
<dbReference type="RefSeq" id="NP_001075501.1">
    <property type="nucleotide sequence ID" value="NM_001082032.1"/>
</dbReference>
<dbReference type="SMR" id="O46559"/>
<dbReference type="FunCoup" id="O46559">
    <property type="interactions" value="17"/>
</dbReference>
<dbReference type="STRING" id="9986.ENSOCUP00000001411"/>
<dbReference type="ESTHER" id="rabit-1hlip">
    <property type="family name" value="Hepatic_Lipase"/>
</dbReference>
<dbReference type="GlyCosmos" id="O46559">
    <property type="glycosylation" value="2 sites, No reported glycans"/>
</dbReference>
<dbReference type="PaxDb" id="9986-ENSOCUP00000001411"/>
<dbReference type="GeneID" id="100008678"/>
<dbReference type="KEGG" id="ocu:100008678"/>
<dbReference type="CTD" id="3990"/>
<dbReference type="eggNOG" id="ENOG502QVTG">
    <property type="taxonomic scope" value="Eukaryota"/>
</dbReference>
<dbReference type="InParanoid" id="O46559"/>
<dbReference type="OrthoDB" id="199913at2759"/>
<dbReference type="Proteomes" id="UP000001811">
    <property type="component" value="Unplaced"/>
</dbReference>
<dbReference type="GO" id="GO:0034364">
    <property type="term" value="C:high-density lipoprotein particle"/>
    <property type="evidence" value="ECO:0007669"/>
    <property type="project" value="UniProtKB-KW"/>
</dbReference>
<dbReference type="GO" id="GO:0034185">
    <property type="term" value="F:apolipoprotein binding"/>
    <property type="evidence" value="ECO:0007669"/>
    <property type="project" value="TreeGrafter"/>
</dbReference>
<dbReference type="GO" id="GO:0008201">
    <property type="term" value="F:heparin binding"/>
    <property type="evidence" value="ECO:0007669"/>
    <property type="project" value="UniProtKB-KW"/>
</dbReference>
<dbReference type="GO" id="GO:0004465">
    <property type="term" value="F:lipoprotein lipase activity"/>
    <property type="evidence" value="ECO:0007669"/>
    <property type="project" value="TreeGrafter"/>
</dbReference>
<dbReference type="GO" id="GO:0004622">
    <property type="term" value="F:lysophospholipase activity"/>
    <property type="evidence" value="ECO:0007669"/>
    <property type="project" value="UniProtKB-EC"/>
</dbReference>
<dbReference type="GO" id="GO:0008970">
    <property type="term" value="F:phospholipase A1 activity"/>
    <property type="evidence" value="ECO:0000250"/>
    <property type="project" value="UniProtKB"/>
</dbReference>
<dbReference type="GO" id="GO:0004806">
    <property type="term" value="F:triacylglycerol lipase activity"/>
    <property type="evidence" value="ECO:0000314"/>
    <property type="project" value="UniProtKB"/>
</dbReference>
<dbReference type="GO" id="GO:0016042">
    <property type="term" value="P:lipid catabolic process"/>
    <property type="evidence" value="ECO:0007669"/>
    <property type="project" value="UniProtKB-KW"/>
</dbReference>
<dbReference type="CDD" id="cd00707">
    <property type="entry name" value="Pancreat_lipase_like"/>
    <property type="match status" value="1"/>
</dbReference>
<dbReference type="CDD" id="cd01758">
    <property type="entry name" value="PLAT_LPL"/>
    <property type="match status" value="1"/>
</dbReference>
<dbReference type="FunFam" id="3.40.50.1820:FF:000101">
    <property type="entry name" value="Hepatic triacylglycerol lipase"/>
    <property type="match status" value="1"/>
</dbReference>
<dbReference type="FunFam" id="2.60.60.20:FF:000010">
    <property type="entry name" value="hepatic triacylglycerol lipase"/>
    <property type="match status" value="1"/>
</dbReference>
<dbReference type="Gene3D" id="3.40.50.1820">
    <property type="entry name" value="alpha/beta hydrolase"/>
    <property type="match status" value="1"/>
</dbReference>
<dbReference type="Gene3D" id="2.60.60.20">
    <property type="entry name" value="PLAT/LH2 domain"/>
    <property type="match status" value="1"/>
</dbReference>
<dbReference type="InterPro" id="IPR029058">
    <property type="entry name" value="AB_hydrolase_fold"/>
</dbReference>
<dbReference type="InterPro" id="IPR013818">
    <property type="entry name" value="Lipase"/>
</dbReference>
<dbReference type="InterPro" id="IPR002333">
    <property type="entry name" value="Lipase_hep"/>
</dbReference>
<dbReference type="InterPro" id="IPR016272">
    <property type="entry name" value="Lipase_LIPH"/>
</dbReference>
<dbReference type="InterPro" id="IPR033906">
    <property type="entry name" value="Lipase_N"/>
</dbReference>
<dbReference type="InterPro" id="IPR001024">
    <property type="entry name" value="PLAT/LH2_dom"/>
</dbReference>
<dbReference type="InterPro" id="IPR036392">
    <property type="entry name" value="PLAT/LH2_dom_sf"/>
</dbReference>
<dbReference type="InterPro" id="IPR000734">
    <property type="entry name" value="TAG_lipase"/>
</dbReference>
<dbReference type="PANTHER" id="PTHR11610:SF2">
    <property type="entry name" value="HEPATIC TRIACYLGLYCEROL LIPASE"/>
    <property type="match status" value="1"/>
</dbReference>
<dbReference type="PANTHER" id="PTHR11610">
    <property type="entry name" value="LIPASE"/>
    <property type="match status" value="1"/>
</dbReference>
<dbReference type="Pfam" id="PF00151">
    <property type="entry name" value="Lipase"/>
    <property type="match status" value="1"/>
</dbReference>
<dbReference type="Pfam" id="PF01477">
    <property type="entry name" value="PLAT"/>
    <property type="match status" value="1"/>
</dbReference>
<dbReference type="PIRSF" id="PIRSF000865">
    <property type="entry name" value="Lipoprotein_lipase_LIPH"/>
    <property type="match status" value="1"/>
</dbReference>
<dbReference type="PRINTS" id="PR00824">
    <property type="entry name" value="HEPLIPASE"/>
</dbReference>
<dbReference type="PRINTS" id="PR00821">
    <property type="entry name" value="TAGLIPASE"/>
</dbReference>
<dbReference type="SMART" id="SM00308">
    <property type="entry name" value="LH2"/>
    <property type="match status" value="1"/>
</dbReference>
<dbReference type="SUPFAM" id="SSF53474">
    <property type="entry name" value="alpha/beta-Hydrolases"/>
    <property type="match status" value="1"/>
</dbReference>
<dbReference type="SUPFAM" id="SSF49723">
    <property type="entry name" value="Lipase/lipooxygenase domain (PLAT/LH2 domain)"/>
    <property type="match status" value="1"/>
</dbReference>
<dbReference type="PROSITE" id="PS00120">
    <property type="entry name" value="LIPASE_SER"/>
    <property type="match status" value="1"/>
</dbReference>
<dbReference type="PROSITE" id="PS50095">
    <property type="entry name" value="PLAT"/>
    <property type="match status" value="1"/>
</dbReference>
<protein>
    <recommendedName>
        <fullName>Hepatic triacylglycerol lipase</fullName>
        <shortName>HL</shortName>
        <shortName>Hepatic lipase</shortName>
        <ecNumber evidence="7">3.1.1.3</ecNumber>
    </recommendedName>
    <alternativeName>
        <fullName>Lipase member C</fullName>
    </alternativeName>
    <alternativeName>
        <fullName>Lysophospholipase</fullName>
        <ecNumber evidence="2">3.1.1.5</ecNumber>
    </alternativeName>
    <alternativeName>
        <fullName>Phospholipase A1</fullName>
        <ecNumber evidence="2">3.1.1.32</ecNumber>
    </alternativeName>
</protein>
<reference key="1">
    <citation type="journal article" date="1991" name="J. Lipid Res.">
        <title>Rabbit hepatic lipase cDNA sequence: low activity is associated with low messenger RNA levels.</title>
        <authorList>
            <person name="Warren R.J."/>
            <person name="Ebert D.L."/>
            <person name="Mitchell A."/>
            <person name="Barter P.J."/>
        </authorList>
    </citation>
    <scope>NUCLEOTIDE SEQUENCE [MRNA]</scope>
    <scope>FUNCTION</scope>
    <scope>CATALYTIC ACTIVITY</scope>
</reference>
<reference key="2">
    <citation type="submission" date="1998-01" db="EMBL/GenBank/DDBJ databases">
        <authorList>
            <person name="Warren R.J."/>
            <person name="Ebert D.L."/>
            <person name="Mitchell A."/>
            <person name="Barter P.J."/>
        </authorList>
    </citation>
    <scope>SEQUENCE REVISION</scope>
</reference>
<proteinExistence type="evidence at protein level"/>